<protein>
    <recommendedName>
        <fullName evidence="1">Enolase</fullName>
        <ecNumber evidence="1">4.2.1.11</ecNumber>
    </recommendedName>
    <alternativeName>
        <fullName evidence="1">2-phospho-D-glycerate hydro-lyase</fullName>
    </alternativeName>
    <alternativeName>
        <fullName evidence="1">2-phosphoglycerate dehydratase</fullName>
    </alternativeName>
</protein>
<comment type="function">
    <text evidence="1">Catalyzes the reversible conversion of 2-phosphoglycerate (2-PG) into phosphoenolpyruvate (PEP). It is essential for the degradation of carbohydrates via glycolysis.</text>
</comment>
<comment type="catalytic activity">
    <reaction evidence="1">
        <text>(2R)-2-phosphoglycerate = phosphoenolpyruvate + H2O</text>
        <dbReference type="Rhea" id="RHEA:10164"/>
        <dbReference type="ChEBI" id="CHEBI:15377"/>
        <dbReference type="ChEBI" id="CHEBI:58289"/>
        <dbReference type="ChEBI" id="CHEBI:58702"/>
        <dbReference type="EC" id="4.2.1.11"/>
    </reaction>
</comment>
<comment type="cofactor">
    <cofactor evidence="1">
        <name>Mg(2+)</name>
        <dbReference type="ChEBI" id="CHEBI:18420"/>
    </cofactor>
    <text evidence="1">Binds a second Mg(2+) ion via substrate during catalysis.</text>
</comment>
<comment type="pathway">
    <text evidence="1">Carbohydrate degradation; glycolysis; pyruvate from D-glyceraldehyde 3-phosphate: step 4/5.</text>
</comment>
<comment type="subcellular location">
    <subcellularLocation>
        <location evidence="1">Cytoplasm</location>
    </subcellularLocation>
    <subcellularLocation>
        <location evidence="1">Secreted</location>
    </subcellularLocation>
    <subcellularLocation>
        <location evidence="1">Cell surface</location>
    </subcellularLocation>
    <text evidence="1">Fractions of enolase are present in both the cytoplasm and on the cell surface.</text>
</comment>
<comment type="similarity">
    <text evidence="1">Belongs to the enolase family.</text>
</comment>
<dbReference type="EC" id="4.2.1.11" evidence="1"/>
<dbReference type="EMBL" id="CP000758">
    <property type="protein sequence ID" value="ABS14772.1"/>
    <property type="molecule type" value="Genomic_DNA"/>
</dbReference>
<dbReference type="RefSeq" id="WP_012091969.1">
    <property type="nucleotide sequence ID" value="NC_009667.1"/>
</dbReference>
<dbReference type="SMR" id="A6X0L8"/>
<dbReference type="STRING" id="439375.Oant_2056"/>
<dbReference type="KEGG" id="oan:Oant_2056"/>
<dbReference type="PATRIC" id="fig|439375.7.peg.2162"/>
<dbReference type="eggNOG" id="COG0148">
    <property type="taxonomic scope" value="Bacteria"/>
</dbReference>
<dbReference type="HOGENOM" id="CLU_031223_2_1_5"/>
<dbReference type="PhylomeDB" id="A6X0L8"/>
<dbReference type="UniPathway" id="UPA00109">
    <property type="reaction ID" value="UER00187"/>
</dbReference>
<dbReference type="Proteomes" id="UP000002301">
    <property type="component" value="Chromosome 1"/>
</dbReference>
<dbReference type="GO" id="GO:0009986">
    <property type="term" value="C:cell surface"/>
    <property type="evidence" value="ECO:0007669"/>
    <property type="project" value="UniProtKB-SubCell"/>
</dbReference>
<dbReference type="GO" id="GO:0005576">
    <property type="term" value="C:extracellular region"/>
    <property type="evidence" value="ECO:0007669"/>
    <property type="project" value="UniProtKB-SubCell"/>
</dbReference>
<dbReference type="GO" id="GO:0000015">
    <property type="term" value="C:phosphopyruvate hydratase complex"/>
    <property type="evidence" value="ECO:0007669"/>
    <property type="project" value="InterPro"/>
</dbReference>
<dbReference type="GO" id="GO:0000287">
    <property type="term" value="F:magnesium ion binding"/>
    <property type="evidence" value="ECO:0007669"/>
    <property type="project" value="UniProtKB-UniRule"/>
</dbReference>
<dbReference type="GO" id="GO:0004634">
    <property type="term" value="F:phosphopyruvate hydratase activity"/>
    <property type="evidence" value="ECO:0007669"/>
    <property type="project" value="UniProtKB-UniRule"/>
</dbReference>
<dbReference type="GO" id="GO:0006096">
    <property type="term" value="P:glycolytic process"/>
    <property type="evidence" value="ECO:0007669"/>
    <property type="project" value="UniProtKB-UniRule"/>
</dbReference>
<dbReference type="CDD" id="cd03313">
    <property type="entry name" value="enolase"/>
    <property type="match status" value="1"/>
</dbReference>
<dbReference type="FunFam" id="3.20.20.120:FF:000001">
    <property type="entry name" value="Enolase"/>
    <property type="match status" value="1"/>
</dbReference>
<dbReference type="FunFam" id="3.30.390.10:FF:000001">
    <property type="entry name" value="Enolase"/>
    <property type="match status" value="1"/>
</dbReference>
<dbReference type="Gene3D" id="3.20.20.120">
    <property type="entry name" value="Enolase-like C-terminal domain"/>
    <property type="match status" value="1"/>
</dbReference>
<dbReference type="Gene3D" id="3.30.390.10">
    <property type="entry name" value="Enolase-like, N-terminal domain"/>
    <property type="match status" value="1"/>
</dbReference>
<dbReference type="HAMAP" id="MF_00318">
    <property type="entry name" value="Enolase"/>
    <property type="match status" value="1"/>
</dbReference>
<dbReference type="InterPro" id="IPR000941">
    <property type="entry name" value="Enolase"/>
</dbReference>
<dbReference type="InterPro" id="IPR036849">
    <property type="entry name" value="Enolase-like_C_sf"/>
</dbReference>
<dbReference type="InterPro" id="IPR029017">
    <property type="entry name" value="Enolase-like_N"/>
</dbReference>
<dbReference type="InterPro" id="IPR020810">
    <property type="entry name" value="Enolase_C"/>
</dbReference>
<dbReference type="InterPro" id="IPR020809">
    <property type="entry name" value="Enolase_CS"/>
</dbReference>
<dbReference type="InterPro" id="IPR020811">
    <property type="entry name" value="Enolase_N"/>
</dbReference>
<dbReference type="NCBIfam" id="TIGR01060">
    <property type="entry name" value="eno"/>
    <property type="match status" value="1"/>
</dbReference>
<dbReference type="PANTHER" id="PTHR11902">
    <property type="entry name" value="ENOLASE"/>
    <property type="match status" value="1"/>
</dbReference>
<dbReference type="PANTHER" id="PTHR11902:SF1">
    <property type="entry name" value="ENOLASE"/>
    <property type="match status" value="1"/>
</dbReference>
<dbReference type="Pfam" id="PF00113">
    <property type="entry name" value="Enolase_C"/>
    <property type="match status" value="1"/>
</dbReference>
<dbReference type="Pfam" id="PF03952">
    <property type="entry name" value="Enolase_N"/>
    <property type="match status" value="1"/>
</dbReference>
<dbReference type="PIRSF" id="PIRSF001400">
    <property type="entry name" value="Enolase"/>
    <property type="match status" value="1"/>
</dbReference>
<dbReference type="PRINTS" id="PR00148">
    <property type="entry name" value="ENOLASE"/>
</dbReference>
<dbReference type="SFLD" id="SFLDS00001">
    <property type="entry name" value="Enolase"/>
    <property type="match status" value="1"/>
</dbReference>
<dbReference type="SFLD" id="SFLDF00002">
    <property type="entry name" value="enolase"/>
    <property type="match status" value="1"/>
</dbReference>
<dbReference type="SMART" id="SM01192">
    <property type="entry name" value="Enolase_C"/>
    <property type="match status" value="1"/>
</dbReference>
<dbReference type="SMART" id="SM01193">
    <property type="entry name" value="Enolase_N"/>
    <property type="match status" value="1"/>
</dbReference>
<dbReference type="SUPFAM" id="SSF51604">
    <property type="entry name" value="Enolase C-terminal domain-like"/>
    <property type="match status" value="1"/>
</dbReference>
<dbReference type="SUPFAM" id="SSF54826">
    <property type="entry name" value="Enolase N-terminal domain-like"/>
    <property type="match status" value="1"/>
</dbReference>
<dbReference type="PROSITE" id="PS00164">
    <property type="entry name" value="ENOLASE"/>
    <property type="match status" value="1"/>
</dbReference>
<keyword id="KW-0963">Cytoplasm</keyword>
<keyword id="KW-0324">Glycolysis</keyword>
<keyword id="KW-0456">Lyase</keyword>
<keyword id="KW-0460">Magnesium</keyword>
<keyword id="KW-0479">Metal-binding</keyword>
<keyword id="KW-1185">Reference proteome</keyword>
<keyword id="KW-0964">Secreted</keyword>
<name>ENO_BRUA4</name>
<feature type="chain" id="PRO_1000019230" description="Enolase">
    <location>
        <begin position="1"/>
        <end position="425"/>
    </location>
</feature>
<feature type="active site" description="Proton donor" evidence="1">
    <location>
        <position position="204"/>
    </location>
</feature>
<feature type="active site" description="Proton acceptor" evidence="1">
    <location>
        <position position="336"/>
    </location>
</feature>
<feature type="binding site" evidence="1">
    <location>
        <position position="162"/>
    </location>
    <ligand>
        <name>(2R)-2-phosphoglycerate</name>
        <dbReference type="ChEBI" id="CHEBI:58289"/>
    </ligand>
</feature>
<feature type="binding site" evidence="1">
    <location>
        <position position="241"/>
    </location>
    <ligand>
        <name>Mg(2+)</name>
        <dbReference type="ChEBI" id="CHEBI:18420"/>
    </ligand>
</feature>
<feature type="binding site" evidence="1">
    <location>
        <position position="284"/>
    </location>
    <ligand>
        <name>Mg(2+)</name>
        <dbReference type="ChEBI" id="CHEBI:18420"/>
    </ligand>
</feature>
<feature type="binding site" evidence="1">
    <location>
        <position position="311"/>
    </location>
    <ligand>
        <name>Mg(2+)</name>
        <dbReference type="ChEBI" id="CHEBI:18420"/>
    </ligand>
</feature>
<feature type="binding site" evidence="1">
    <location>
        <position position="336"/>
    </location>
    <ligand>
        <name>(2R)-2-phosphoglycerate</name>
        <dbReference type="ChEBI" id="CHEBI:58289"/>
    </ligand>
</feature>
<feature type="binding site" evidence="1">
    <location>
        <position position="365"/>
    </location>
    <ligand>
        <name>(2R)-2-phosphoglycerate</name>
        <dbReference type="ChEBI" id="CHEBI:58289"/>
    </ligand>
</feature>
<feature type="binding site" evidence="1">
    <location>
        <position position="366"/>
    </location>
    <ligand>
        <name>(2R)-2-phosphoglycerate</name>
        <dbReference type="ChEBI" id="CHEBI:58289"/>
    </ligand>
</feature>
<feature type="binding site" evidence="1">
    <location>
        <position position="387"/>
    </location>
    <ligand>
        <name>(2R)-2-phosphoglycerate</name>
        <dbReference type="ChEBI" id="CHEBI:58289"/>
    </ligand>
</feature>
<sequence length="425" mass="45301">MTAIIDIVGREILDSRGNPTVEVDVVLEDGSFGRAAVPSGASTGAHEAVELRDGGSRYLGKGVEKAVEAVNGKIFDAIAGMDAESQLLIDQTMIELDGSANKGNIGANAILGVSLAVAKAAAQATGLPLYRYVGGANAHVLPVPMMNIINGGAHADNPIDFQEFMILPVGASSVREAVRYGSEVFHTLKKRLKDAGHNTNVGDEGGFAPNLKNAQAALDFIMESIEKAGFKPGEDIALGLDCAATEFFKDGNYVYEGERKTRDPKAQAKYLAKLASDYPIVTIEDGMAEDDWEGWKYLTDLIGDKCQLVGDDLFVTNSARLRDGIRMGVANSILVKVNQIGSLSETLDAVETAHKAGYTAVMSHRSGETEDSTIADLAVATNCGQIKTGSLARSDRTAKYNQLIRIEEELGKQARYAGRNALKFL</sequence>
<organism>
    <name type="scientific">Brucella anthropi (strain ATCC 49188 / DSM 6882 / CCUG 24695 / JCM 21032 / LMG 3331 / NBRC 15819 / NCTC 12168 / Alc 37)</name>
    <name type="common">Ochrobactrum anthropi</name>
    <dbReference type="NCBI Taxonomy" id="439375"/>
    <lineage>
        <taxon>Bacteria</taxon>
        <taxon>Pseudomonadati</taxon>
        <taxon>Pseudomonadota</taxon>
        <taxon>Alphaproteobacteria</taxon>
        <taxon>Hyphomicrobiales</taxon>
        <taxon>Brucellaceae</taxon>
        <taxon>Brucella/Ochrobactrum group</taxon>
        <taxon>Brucella</taxon>
    </lineage>
</organism>
<proteinExistence type="inferred from homology"/>
<evidence type="ECO:0000255" key="1">
    <source>
        <dbReference type="HAMAP-Rule" id="MF_00318"/>
    </source>
</evidence>
<gene>
    <name evidence="1" type="primary">eno</name>
    <name type="ordered locus">Oant_2056</name>
</gene>
<accession>A6X0L8</accession>
<reference key="1">
    <citation type="journal article" date="2011" name="J. Bacteriol.">
        <title>Genome of Ochrobactrum anthropi ATCC 49188 T, a versatile opportunistic pathogen and symbiont of several eukaryotic hosts.</title>
        <authorList>
            <person name="Chain P.S."/>
            <person name="Lang D.M."/>
            <person name="Comerci D.J."/>
            <person name="Malfatti S.A."/>
            <person name="Vergez L.M."/>
            <person name="Shin M."/>
            <person name="Ugalde R.A."/>
            <person name="Garcia E."/>
            <person name="Tolmasky M.E."/>
        </authorList>
    </citation>
    <scope>NUCLEOTIDE SEQUENCE [LARGE SCALE GENOMIC DNA]</scope>
    <source>
        <strain>ATCC 49188 / DSM 6882 / CCUG 24695 / JCM 21032 / LMG 3331 / NBRC 15819 / NCTC 12168 / Alc 37</strain>
    </source>
</reference>